<keyword id="KW-0687">Ribonucleoprotein</keyword>
<keyword id="KW-0689">Ribosomal protein</keyword>
<keyword id="KW-0694">RNA-binding</keyword>
<keyword id="KW-0699">rRNA-binding</keyword>
<dbReference type="EMBL" id="AP008981">
    <property type="protein sequence ID" value="BAG40511.1"/>
    <property type="molecule type" value="Genomic_DNA"/>
</dbReference>
<dbReference type="RefSeq" id="WP_012461614.1">
    <property type="nucleotide sequence ID" value="NC_010793.1"/>
</dbReference>
<dbReference type="SMR" id="B3CT14"/>
<dbReference type="KEGG" id="ott:OTT_1053"/>
<dbReference type="HOGENOM" id="CLU_073626_1_1_5"/>
<dbReference type="OrthoDB" id="9811714at2"/>
<dbReference type="Proteomes" id="UP000001033">
    <property type="component" value="Chromosome"/>
</dbReference>
<dbReference type="GO" id="GO:0022627">
    <property type="term" value="C:cytosolic small ribosomal subunit"/>
    <property type="evidence" value="ECO:0007669"/>
    <property type="project" value="TreeGrafter"/>
</dbReference>
<dbReference type="GO" id="GO:0019843">
    <property type="term" value="F:rRNA binding"/>
    <property type="evidence" value="ECO:0007669"/>
    <property type="project" value="UniProtKB-UniRule"/>
</dbReference>
<dbReference type="GO" id="GO:0003735">
    <property type="term" value="F:structural constituent of ribosome"/>
    <property type="evidence" value="ECO:0007669"/>
    <property type="project" value="InterPro"/>
</dbReference>
<dbReference type="GO" id="GO:0006412">
    <property type="term" value="P:translation"/>
    <property type="evidence" value="ECO:0007669"/>
    <property type="project" value="UniProtKB-UniRule"/>
</dbReference>
<dbReference type="CDD" id="cd00364">
    <property type="entry name" value="Ribosomal_uS17"/>
    <property type="match status" value="1"/>
</dbReference>
<dbReference type="Gene3D" id="2.40.50.140">
    <property type="entry name" value="Nucleic acid-binding proteins"/>
    <property type="match status" value="1"/>
</dbReference>
<dbReference type="HAMAP" id="MF_01345_B">
    <property type="entry name" value="Ribosomal_uS17_B"/>
    <property type="match status" value="1"/>
</dbReference>
<dbReference type="InterPro" id="IPR012340">
    <property type="entry name" value="NA-bd_OB-fold"/>
</dbReference>
<dbReference type="InterPro" id="IPR000266">
    <property type="entry name" value="Ribosomal_uS17"/>
</dbReference>
<dbReference type="InterPro" id="IPR019984">
    <property type="entry name" value="Ribosomal_uS17_bact/chlr"/>
</dbReference>
<dbReference type="InterPro" id="IPR019979">
    <property type="entry name" value="Ribosomal_uS17_CS"/>
</dbReference>
<dbReference type="NCBIfam" id="NF004123">
    <property type="entry name" value="PRK05610.1"/>
    <property type="match status" value="1"/>
</dbReference>
<dbReference type="NCBIfam" id="TIGR03635">
    <property type="entry name" value="uS17_bact"/>
    <property type="match status" value="1"/>
</dbReference>
<dbReference type="PANTHER" id="PTHR10744">
    <property type="entry name" value="40S RIBOSOMAL PROTEIN S11 FAMILY MEMBER"/>
    <property type="match status" value="1"/>
</dbReference>
<dbReference type="PANTHER" id="PTHR10744:SF1">
    <property type="entry name" value="SMALL RIBOSOMAL SUBUNIT PROTEIN US17M"/>
    <property type="match status" value="1"/>
</dbReference>
<dbReference type="Pfam" id="PF00366">
    <property type="entry name" value="Ribosomal_S17"/>
    <property type="match status" value="1"/>
</dbReference>
<dbReference type="PRINTS" id="PR00973">
    <property type="entry name" value="RIBOSOMALS17"/>
</dbReference>
<dbReference type="SUPFAM" id="SSF50249">
    <property type="entry name" value="Nucleic acid-binding proteins"/>
    <property type="match status" value="1"/>
</dbReference>
<dbReference type="PROSITE" id="PS00056">
    <property type="entry name" value="RIBOSOMAL_S17"/>
    <property type="match status" value="1"/>
</dbReference>
<name>RS17_ORITI</name>
<accession>B3CT14</accession>
<feature type="chain" id="PRO_1000143280" description="Small ribosomal subunit protein uS17">
    <location>
        <begin position="1"/>
        <end position="79"/>
    </location>
</feature>
<sequence>MPRRVLQGQVISAKSDKTIIVSVERRFKHPVYHKTVKIAKKYAVHDPDNLYNQGDKVKIIESRPISKTKCWHVIEDKGQ</sequence>
<reference key="1">
    <citation type="journal article" date="2008" name="DNA Res.">
        <title>The whole-genome sequencing of the obligate intracellular bacterium Orientia tsutsugamushi revealed massive gene amplification during reductive genome evolution.</title>
        <authorList>
            <person name="Nakayama K."/>
            <person name="Yamashita A."/>
            <person name="Kurokawa K."/>
            <person name="Morimoto T."/>
            <person name="Ogawa M."/>
            <person name="Fukuhara M."/>
            <person name="Urakami H."/>
            <person name="Ohnishi M."/>
            <person name="Uchiyama I."/>
            <person name="Ogura Y."/>
            <person name="Ooka T."/>
            <person name="Oshima K."/>
            <person name="Tamura A."/>
            <person name="Hattori M."/>
            <person name="Hayashi T."/>
        </authorList>
    </citation>
    <scope>NUCLEOTIDE SEQUENCE [LARGE SCALE GENOMIC DNA]</scope>
    <source>
        <strain>Ikeda</strain>
    </source>
</reference>
<gene>
    <name evidence="1" type="primary">rpsQ</name>
    <name type="ordered locus">OTT_1053</name>
</gene>
<protein>
    <recommendedName>
        <fullName evidence="1">Small ribosomal subunit protein uS17</fullName>
    </recommendedName>
    <alternativeName>
        <fullName evidence="2">30S ribosomal protein S17</fullName>
    </alternativeName>
</protein>
<comment type="function">
    <text evidence="1">One of the primary rRNA binding proteins, it binds specifically to the 5'-end of 16S ribosomal RNA.</text>
</comment>
<comment type="subunit">
    <text evidence="1">Part of the 30S ribosomal subunit.</text>
</comment>
<comment type="similarity">
    <text evidence="1">Belongs to the universal ribosomal protein uS17 family.</text>
</comment>
<proteinExistence type="inferred from homology"/>
<evidence type="ECO:0000255" key="1">
    <source>
        <dbReference type="HAMAP-Rule" id="MF_01345"/>
    </source>
</evidence>
<evidence type="ECO:0000305" key="2"/>
<organism>
    <name type="scientific">Orientia tsutsugamushi (strain Ikeda)</name>
    <name type="common">Rickettsia tsutsugamushi</name>
    <dbReference type="NCBI Taxonomy" id="334380"/>
    <lineage>
        <taxon>Bacteria</taxon>
        <taxon>Pseudomonadati</taxon>
        <taxon>Pseudomonadota</taxon>
        <taxon>Alphaproteobacteria</taxon>
        <taxon>Rickettsiales</taxon>
        <taxon>Rickettsiaceae</taxon>
        <taxon>Rickettsieae</taxon>
        <taxon>Orientia</taxon>
    </lineage>
</organism>